<reference key="1">
    <citation type="journal article" date="2012" name="BMC Genomics">
        <title>The venom-gland transcriptome of the eastern diamondback rattlesnake (Crotalus adamanteus).</title>
        <authorList>
            <person name="Rokyta D.R."/>
            <person name="Lemmon A.R."/>
            <person name="Margres M.J."/>
            <person name="Aronow K."/>
        </authorList>
    </citation>
    <scope>NUCLEOTIDE SEQUENCE [MRNA]</scope>
    <source>
        <tissue>Venom gland</tissue>
    </source>
</reference>
<reference key="2">
    <citation type="journal article" date="2014" name="J. Proteomics">
        <title>Linking the transcriptome and proteome to characterize the venom of the eastern diamondback rattlesnake (Crotalus adamanteus).</title>
        <authorList>
            <person name="Margres M.J."/>
            <person name="McGivern J.J."/>
            <person name="Wray K.P."/>
            <person name="Seavy M."/>
            <person name="Calvin K."/>
            <person name="Rokyta D.R."/>
        </authorList>
    </citation>
    <scope>IDENTIFICATION BY MASS SPECTROMETRY</scope>
    <source>
        <tissue>Venom</tissue>
    </source>
</reference>
<accession>J3S820</accession>
<evidence type="ECO:0000250" key="1"/>
<evidence type="ECO:0000255" key="2"/>
<evidence type="ECO:0000305" key="3"/>
<protein>
    <recommendedName>
        <fullName>Hyaluronidase</fullName>
        <ecNumber>3.2.1.35</ecNumber>
    </recommendedName>
    <alternativeName>
        <fullName>Hyaluronoglucosaminidase</fullName>
    </alternativeName>
    <alternativeName>
        <fullName>Venom spreading factor</fullName>
    </alternativeName>
</protein>
<name>HYAL_CROAD</name>
<proteinExistence type="evidence at protein level"/>
<sequence length="449" mass="52484">MYHLWIKCLAAWIFLKRFNGVHVMQAKAPMYPNEPFLVFWNAPTTQCRLRYKVDLDLNTFHIVTNANDSLSGSAVTIFYPTHLGFYPHIDGRGHFFNGIIPQNESLAKHLNKSKSDINRMIPLRTFHGLGVIDWENWRPQWDRNWGSKNVYRNRSIQFARDLHPELSEDEIKRLAKQEYEKAAKSFMRDTLLLAEEMRPYGYWGYYLYPDCQNYNYKTKPDQYTGECPDIEITRNNQLLWLWRDSTALFPNIYLETVLRSSDNALKFVHHRLKESMRIASMARKDYALPVFPYARPFYAYTFEPLTEEDLVNTVGETAAMGAAGIVFWGSMQYASTVDSCRKVKDYIDGPLGRYIVNVTTAAKICSHFLCKKHGRCVRKHSDSNAFLHLFPDSFRILVHGNATEKKVIVKGKLELENLIFLINNFMCQCYQGWKGLYCEKHSIKDIRKI</sequence>
<keyword id="KW-1015">Disulfide bond</keyword>
<keyword id="KW-0245">EGF-like domain</keyword>
<keyword id="KW-0325">Glycoprotein</keyword>
<keyword id="KW-0326">Glycosidase</keyword>
<keyword id="KW-0378">Hydrolase</keyword>
<keyword id="KW-0964">Secreted</keyword>
<keyword id="KW-0732">Signal</keyword>
<organism>
    <name type="scientific">Crotalus adamanteus</name>
    <name type="common">Eastern diamondback rattlesnake</name>
    <dbReference type="NCBI Taxonomy" id="8729"/>
    <lineage>
        <taxon>Eukaryota</taxon>
        <taxon>Metazoa</taxon>
        <taxon>Chordata</taxon>
        <taxon>Craniata</taxon>
        <taxon>Vertebrata</taxon>
        <taxon>Euteleostomi</taxon>
        <taxon>Lepidosauria</taxon>
        <taxon>Squamata</taxon>
        <taxon>Bifurcata</taxon>
        <taxon>Unidentata</taxon>
        <taxon>Episquamata</taxon>
        <taxon>Toxicofera</taxon>
        <taxon>Serpentes</taxon>
        <taxon>Colubroidea</taxon>
        <taxon>Viperidae</taxon>
        <taxon>Crotalinae</taxon>
        <taxon>Crotalus</taxon>
    </lineage>
</organism>
<dbReference type="EC" id="3.2.1.35"/>
<dbReference type="EMBL" id="JU173662">
    <property type="protein sequence ID" value="AFJ49188.1"/>
    <property type="molecule type" value="mRNA"/>
</dbReference>
<dbReference type="SMR" id="J3S820"/>
<dbReference type="CAZy" id="GH56">
    <property type="family name" value="Glycoside Hydrolase Family 56"/>
</dbReference>
<dbReference type="GO" id="GO:0031410">
    <property type="term" value="C:cytoplasmic vesicle"/>
    <property type="evidence" value="ECO:0007669"/>
    <property type="project" value="TreeGrafter"/>
</dbReference>
<dbReference type="GO" id="GO:0005576">
    <property type="term" value="C:extracellular region"/>
    <property type="evidence" value="ECO:0007669"/>
    <property type="project" value="UniProtKB-SubCell"/>
</dbReference>
<dbReference type="GO" id="GO:0004415">
    <property type="term" value="F:hyalurononglucosaminidase activity"/>
    <property type="evidence" value="ECO:0007669"/>
    <property type="project" value="UniProtKB-EC"/>
</dbReference>
<dbReference type="GO" id="GO:0005975">
    <property type="term" value="P:carbohydrate metabolic process"/>
    <property type="evidence" value="ECO:0007669"/>
    <property type="project" value="InterPro"/>
</dbReference>
<dbReference type="GO" id="GO:0030214">
    <property type="term" value="P:hyaluronan catabolic process"/>
    <property type="evidence" value="ECO:0007669"/>
    <property type="project" value="TreeGrafter"/>
</dbReference>
<dbReference type="FunFam" id="3.20.20.70:FF:000065">
    <property type="entry name" value="Hyaluronidase"/>
    <property type="match status" value="1"/>
</dbReference>
<dbReference type="Gene3D" id="3.20.20.70">
    <property type="entry name" value="Aldolase class I"/>
    <property type="match status" value="1"/>
</dbReference>
<dbReference type="InterPro" id="IPR013785">
    <property type="entry name" value="Aldolase_TIM"/>
</dbReference>
<dbReference type="InterPro" id="IPR017853">
    <property type="entry name" value="Glycoside_hydrolase_SF"/>
</dbReference>
<dbReference type="InterPro" id="IPR018155">
    <property type="entry name" value="Hyaluronidase"/>
</dbReference>
<dbReference type="PANTHER" id="PTHR11769">
    <property type="entry name" value="HYALURONIDASE"/>
    <property type="match status" value="1"/>
</dbReference>
<dbReference type="PANTHER" id="PTHR11769:SF9">
    <property type="entry name" value="HYALURONIDASE"/>
    <property type="match status" value="1"/>
</dbReference>
<dbReference type="Pfam" id="PF01630">
    <property type="entry name" value="Glyco_hydro_56"/>
    <property type="match status" value="1"/>
</dbReference>
<dbReference type="PIRSF" id="PIRSF038193">
    <property type="entry name" value="Hyaluronidase"/>
    <property type="match status" value="1"/>
</dbReference>
<dbReference type="PRINTS" id="PR00846">
    <property type="entry name" value="GLHYDRLASE56"/>
</dbReference>
<dbReference type="SUPFAM" id="SSF51445">
    <property type="entry name" value="(Trans)glycosidases"/>
    <property type="match status" value="1"/>
</dbReference>
<dbReference type="PROSITE" id="PS00022">
    <property type="entry name" value="EGF_1"/>
    <property type="match status" value="1"/>
</dbReference>
<dbReference type="PROSITE" id="PS01186">
    <property type="entry name" value="EGF_2"/>
    <property type="match status" value="1"/>
</dbReference>
<feature type="signal peptide" evidence="1">
    <location>
        <begin position="1"/>
        <end position="23"/>
    </location>
</feature>
<feature type="chain" id="PRO_0000425658" description="Hyaluronidase">
    <location>
        <begin position="24"/>
        <end position="449"/>
    </location>
</feature>
<feature type="domain" description="EGF-like">
    <location>
        <begin position="427"/>
        <end position="438"/>
    </location>
</feature>
<feature type="active site" description="Proton donor" evidence="1">
    <location>
        <position position="135"/>
    </location>
</feature>
<feature type="glycosylation site" description="N-linked (GlcNAc...) asparagine" evidence="2">
    <location>
        <position position="67"/>
    </location>
</feature>
<feature type="glycosylation site" description="N-linked (GlcNAc...) asparagine" evidence="2">
    <location>
        <position position="103"/>
    </location>
</feature>
<feature type="glycosylation site" description="N-linked (GlcNAc...) asparagine" evidence="2">
    <location>
        <position position="111"/>
    </location>
</feature>
<feature type="glycosylation site" description="N-linked (GlcNAc...) asparagine" evidence="2">
    <location>
        <position position="153"/>
    </location>
</feature>
<feature type="glycosylation site" description="N-linked (GlcNAc...) asparagine" evidence="2">
    <location>
        <position position="357"/>
    </location>
</feature>
<feature type="glycosylation site" description="N-linked (GlcNAc...) asparagine" evidence="2">
    <location>
        <position position="401"/>
    </location>
</feature>
<feature type="disulfide bond" evidence="1">
    <location>
        <begin position="47"/>
        <end position="340"/>
    </location>
</feature>
<feature type="disulfide bond" evidence="1">
    <location>
        <begin position="211"/>
        <end position="227"/>
    </location>
</feature>
<feature type="disulfide bond" evidence="1">
    <location>
        <begin position="365"/>
        <end position="376"/>
    </location>
</feature>
<feature type="disulfide bond" evidence="1">
    <location>
        <begin position="370"/>
        <end position="427"/>
    </location>
</feature>
<feature type="disulfide bond" evidence="1">
    <location>
        <begin position="429"/>
        <end position="438"/>
    </location>
</feature>
<comment type="function">
    <text evidence="1">Snake venom endo-hyaluronidase that degrades hyaluronan to smaller oligosaccharide fragments. In venom, it is not toxic by itself, but increases the diffusion of other venom proteins by degrading the extracellular matrix. In addition, it displays antiedematogenic activity (By similarity).</text>
</comment>
<comment type="catalytic activity">
    <reaction>
        <text>Random hydrolysis of (1-&gt;4)-linkages between N-acetyl-beta-D-glucosamine and D-glucuronate residues in hyaluronate.</text>
        <dbReference type="EC" id="3.2.1.35"/>
    </reaction>
</comment>
<comment type="subunit">
    <text evidence="1">Monomer.</text>
</comment>
<comment type="subcellular location">
    <subcellularLocation>
        <location>Secreted</location>
    </subcellularLocation>
</comment>
<comment type="tissue specificity">
    <text>Expressed by the venom gland.</text>
</comment>
<comment type="similarity">
    <text evidence="3">Belongs to the glycosyl hydrolase 56 family.</text>
</comment>